<feature type="chain" id="PRO_0000213123" description="Probable alginate O-acetylase AlgI">
    <location>
        <begin position="1"/>
        <end position="499"/>
    </location>
</feature>
<feature type="transmembrane region" description="Helical" evidence="2">
    <location>
        <begin position="7"/>
        <end position="25"/>
    </location>
</feature>
<feature type="transmembrane region" description="Helical" evidence="2">
    <location>
        <begin position="40"/>
        <end position="62"/>
    </location>
</feature>
<feature type="transmembrane region" description="Helical" evidence="2">
    <location>
        <begin position="78"/>
        <end position="100"/>
    </location>
</feature>
<feature type="transmembrane region" description="Helical" evidence="2">
    <location>
        <begin position="115"/>
        <end position="137"/>
    </location>
</feature>
<feature type="transmembrane region" description="Helical" evidence="2">
    <location>
        <begin position="150"/>
        <end position="172"/>
    </location>
</feature>
<feature type="transmembrane region" description="Helical" evidence="2">
    <location>
        <begin position="239"/>
        <end position="261"/>
    </location>
</feature>
<feature type="transmembrane region" description="Helical" evidence="2">
    <location>
        <begin position="312"/>
        <end position="334"/>
    </location>
</feature>
<feature type="transmembrane region" description="Helical" evidence="2">
    <location>
        <begin position="354"/>
        <end position="373"/>
    </location>
</feature>
<feature type="transmembrane region" description="Helical" evidence="2">
    <location>
        <begin position="380"/>
        <end position="397"/>
    </location>
</feature>
<feature type="transmembrane region" description="Helical" evidence="2">
    <location>
        <begin position="407"/>
        <end position="429"/>
    </location>
</feature>
<feature type="transmembrane region" description="Helical" evidence="2">
    <location>
        <begin position="475"/>
        <end position="497"/>
    </location>
</feature>
<feature type="active site" evidence="2">
    <location>
        <position position="322"/>
    </location>
</feature>
<accession>O52196</accession>
<sequence length="499" mass="56387">MVFSSNVFLFLFLPLFLGLYYLSPARYRNLLLLTASYVFYAWWRIDFLGLFAAVTVFNYWIGLRIGAAGVRTQSAQRWLTLGVVVDLCVLGYFKYANFGVDSLNAIITSFGVEPFVVTHILLPIGISFYVFESISYIIDVYRGDTPATRNLVDFAAFVAIFPHLIAGPVLRFRDLVDQFNHRTHTLDKFAEGCTRFMQGFIKKVFIADSLAPIADHCFALSDPTTGDAWLGALAYTAQLYFDFSGYSDMAIGLGLMIGFRFMENFNQPYISQSITEFWRRWHISLSTWLRDYLYISLGGNRGTTFQTYRNLILTMLLGGLWHGANWTFIIWGAWHGTWLAIERALRIDAAPKTIRPLRWVFAFLLVMVGWVIFRAENLDVAWRMYAAMFSFGDWTLSDLNKAQLTSLQIATLLLAYVVIAVYGIRQFYAQPLTGAPKAKANDQADAPQGIVHASSGTLAYSQAIDIPALATRVAVLLLFAASVLKLSAQSFSPFLYFQF</sequence>
<organism>
    <name type="scientific">Azotobacter vinelandii</name>
    <dbReference type="NCBI Taxonomy" id="354"/>
    <lineage>
        <taxon>Bacteria</taxon>
        <taxon>Pseudomonadati</taxon>
        <taxon>Pseudomonadota</taxon>
        <taxon>Gammaproteobacteria</taxon>
        <taxon>Pseudomonadales</taxon>
        <taxon>Pseudomonadaceae</taxon>
        <taxon>Azotobacter</taxon>
    </lineage>
</organism>
<name>ALGI_AZOVI</name>
<gene>
    <name type="primary">algI</name>
</gene>
<protein>
    <recommendedName>
        <fullName>Probable alginate O-acetylase AlgI</fullName>
        <ecNumber>2.3.1.-</ecNumber>
    </recommendedName>
    <alternativeName>
        <fullName>Alginate biosynthesis protein AlgI</fullName>
    </alternativeName>
</protein>
<comment type="function">
    <text>Together with AlgJ and AlgF, forms an inner membrane complex which probably interacts with the alginate polymerization-transport complex and adds acetyl groups at the O-2 and O-3 positions of mannuronate residues. Acetylation of alginate increases cyst resistance to desiccation.</text>
</comment>
<comment type="pathway">
    <text>Glycan biosynthesis; alginate biosynthesis.</text>
</comment>
<comment type="subcellular location">
    <subcellularLocation>
        <location evidence="1">Cell inner membrane</location>
        <topology evidence="1">Multi-pass membrane protein</topology>
    </subcellularLocation>
</comment>
<comment type="similarity">
    <text evidence="3">Belongs to the membrane-bound acyltransferase family.</text>
</comment>
<dbReference type="EC" id="2.3.1.-"/>
<dbReference type="EMBL" id="AF027499">
    <property type="protein sequence ID" value="AAC04568.1"/>
    <property type="molecule type" value="Genomic_DNA"/>
</dbReference>
<dbReference type="RefSeq" id="WP_012699741.1">
    <property type="nucleotide sequence ID" value="NZ_FPKM01000036.1"/>
</dbReference>
<dbReference type="SMR" id="O52196"/>
<dbReference type="OMA" id="YTAQLYF"/>
<dbReference type="UniPathway" id="UPA00286"/>
<dbReference type="GO" id="GO:0005886">
    <property type="term" value="C:plasma membrane"/>
    <property type="evidence" value="ECO:0007669"/>
    <property type="project" value="UniProtKB-SubCell"/>
</dbReference>
<dbReference type="GO" id="GO:0016746">
    <property type="term" value="F:acyltransferase activity"/>
    <property type="evidence" value="ECO:0007669"/>
    <property type="project" value="UniProtKB-KW"/>
</dbReference>
<dbReference type="GO" id="GO:0042121">
    <property type="term" value="P:alginic acid biosynthetic process"/>
    <property type="evidence" value="ECO:0007669"/>
    <property type="project" value="UniProtKB-UniPathway"/>
</dbReference>
<dbReference type="InterPro" id="IPR024194">
    <property type="entry name" value="Ac/AlaTfrase_AlgI/DltB"/>
</dbReference>
<dbReference type="InterPro" id="IPR028362">
    <property type="entry name" value="AlgI"/>
</dbReference>
<dbReference type="InterPro" id="IPR051085">
    <property type="entry name" value="MB_O-acyltransferase"/>
</dbReference>
<dbReference type="InterPro" id="IPR004299">
    <property type="entry name" value="MBOAT_fam"/>
</dbReference>
<dbReference type="PANTHER" id="PTHR13285">
    <property type="entry name" value="ACYLTRANSFERASE"/>
    <property type="match status" value="1"/>
</dbReference>
<dbReference type="PANTHER" id="PTHR13285:SF23">
    <property type="entry name" value="TEICHOIC ACID D-ALANYLTRANSFERASE"/>
    <property type="match status" value="1"/>
</dbReference>
<dbReference type="Pfam" id="PF03062">
    <property type="entry name" value="MBOAT"/>
    <property type="match status" value="1"/>
</dbReference>
<dbReference type="PIRSF" id="PIRSF500217">
    <property type="entry name" value="AlgI"/>
    <property type="match status" value="1"/>
</dbReference>
<dbReference type="PIRSF" id="PIRSF016636">
    <property type="entry name" value="AlgI_DltB"/>
    <property type="match status" value="1"/>
</dbReference>
<proteinExistence type="inferred from homology"/>
<reference key="1">
    <citation type="journal article" date="1999" name="Gene">
        <title>Transcriptional organization of the Azotobacter vinelandii algGXLVIFA genes: characterization of algF mutants.</title>
        <authorList>
            <person name="Vazquez-Ramos A."/>
            <person name="Moreno S."/>
            <person name="Guzman J."/>
            <person name="Alvarado A."/>
            <person name="Espin G."/>
        </authorList>
    </citation>
    <scope>NUCLEOTIDE SEQUENCE [GENOMIC DNA]</scope>
    <source>
        <strain>ATCC 9046</strain>
    </source>
</reference>
<evidence type="ECO:0000250" key="1"/>
<evidence type="ECO:0000255" key="2"/>
<evidence type="ECO:0000305" key="3"/>
<keyword id="KW-0012">Acyltransferase</keyword>
<keyword id="KW-0016">Alginate biosynthesis</keyword>
<keyword id="KW-0997">Cell inner membrane</keyword>
<keyword id="KW-1003">Cell membrane</keyword>
<keyword id="KW-0472">Membrane</keyword>
<keyword id="KW-0808">Transferase</keyword>
<keyword id="KW-0812">Transmembrane</keyword>
<keyword id="KW-1133">Transmembrane helix</keyword>